<evidence type="ECO:0000255" key="1">
    <source>
        <dbReference type="HAMAP-Rule" id="MF_00478"/>
    </source>
</evidence>
<proteinExistence type="inferred from homology"/>
<organism>
    <name type="scientific">Salmonella paratyphi A (strain ATCC 9150 / SARB42)</name>
    <dbReference type="NCBI Taxonomy" id="295319"/>
    <lineage>
        <taxon>Bacteria</taxon>
        <taxon>Pseudomonadati</taxon>
        <taxon>Pseudomonadota</taxon>
        <taxon>Gammaproteobacteria</taxon>
        <taxon>Enterobacterales</taxon>
        <taxon>Enterobacteriaceae</taxon>
        <taxon>Salmonella</taxon>
    </lineage>
</organism>
<dbReference type="EC" id="7.-.-.-" evidence="1"/>
<dbReference type="EMBL" id="CP000026">
    <property type="protein sequence ID" value="AAV77340.1"/>
    <property type="molecule type" value="Genomic_DNA"/>
</dbReference>
<dbReference type="RefSeq" id="WP_001289632.1">
    <property type="nucleotide sequence ID" value="NC_006511.1"/>
</dbReference>
<dbReference type="SMR" id="Q5PIC6"/>
<dbReference type="KEGG" id="spt:SPA1399"/>
<dbReference type="HOGENOM" id="CLU_046659_1_0_6"/>
<dbReference type="Proteomes" id="UP000008185">
    <property type="component" value="Chromosome"/>
</dbReference>
<dbReference type="GO" id="GO:0005886">
    <property type="term" value="C:plasma membrane"/>
    <property type="evidence" value="ECO:0007669"/>
    <property type="project" value="UniProtKB-SubCell"/>
</dbReference>
<dbReference type="GO" id="GO:0022900">
    <property type="term" value="P:electron transport chain"/>
    <property type="evidence" value="ECO:0007669"/>
    <property type="project" value="UniProtKB-UniRule"/>
</dbReference>
<dbReference type="HAMAP" id="MF_00478">
    <property type="entry name" value="RsxE_RnfE"/>
    <property type="match status" value="1"/>
</dbReference>
<dbReference type="InterPro" id="IPR003667">
    <property type="entry name" value="NqrDE/RnfAE"/>
</dbReference>
<dbReference type="InterPro" id="IPR010968">
    <property type="entry name" value="RnfE"/>
</dbReference>
<dbReference type="NCBIfam" id="NF009070">
    <property type="entry name" value="PRK12405.1"/>
    <property type="match status" value="1"/>
</dbReference>
<dbReference type="NCBIfam" id="TIGR01948">
    <property type="entry name" value="rnfE"/>
    <property type="match status" value="1"/>
</dbReference>
<dbReference type="PANTHER" id="PTHR30586">
    <property type="entry name" value="ELECTRON TRANSPORT COMPLEX PROTEIN RNFE"/>
    <property type="match status" value="1"/>
</dbReference>
<dbReference type="PANTHER" id="PTHR30586:SF0">
    <property type="entry name" value="ION-TRANSLOCATING OXIDOREDUCTASE COMPLEX SUBUNIT E"/>
    <property type="match status" value="1"/>
</dbReference>
<dbReference type="Pfam" id="PF02508">
    <property type="entry name" value="Rnf-Nqr"/>
    <property type="match status" value="1"/>
</dbReference>
<dbReference type="PIRSF" id="PIRSF006102">
    <property type="entry name" value="NQR_DE"/>
    <property type="match status" value="1"/>
</dbReference>
<comment type="function">
    <text evidence="1">Part of a membrane-bound complex that couples electron transfer with translocation of ions across the membrane. Required to maintain the reduced state of SoxR.</text>
</comment>
<comment type="subunit">
    <text evidence="1">The complex is composed of six subunits: RsxA, RsxB, RsxC, RsxD, RsxE and RsxG.</text>
</comment>
<comment type="subcellular location">
    <subcellularLocation>
        <location evidence="1">Cell inner membrane</location>
        <topology evidence="1">Multi-pass membrane protein</topology>
    </subcellularLocation>
</comment>
<comment type="similarity">
    <text evidence="1">Belongs to the NqrDE/RnfAE family.</text>
</comment>
<protein>
    <recommendedName>
        <fullName evidence="1">Ion-translocating oxidoreductase complex subunit E</fullName>
        <ecNumber evidence="1">7.-.-.-</ecNumber>
    </recommendedName>
    <alternativeName>
        <fullName evidence="1">Rsx electron transport complex subunit E</fullName>
    </alternativeName>
</protein>
<name>RSXE_SALPA</name>
<accession>Q5PIC6</accession>
<feature type="chain" id="PRO_0000214278" description="Ion-translocating oxidoreductase complex subunit E">
    <location>
        <begin position="1"/>
        <end position="230"/>
    </location>
</feature>
<feature type="transmembrane region" description="Helical" evidence="1">
    <location>
        <begin position="22"/>
        <end position="42"/>
    </location>
</feature>
<feature type="transmembrane region" description="Helical" evidence="1">
    <location>
        <begin position="63"/>
        <end position="83"/>
    </location>
</feature>
<feature type="transmembrane region" description="Helical" evidence="1">
    <location>
        <begin position="86"/>
        <end position="106"/>
    </location>
</feature>
<feature type="transmembrane region" description="Helical" evidence="1">
    <location>
        <begin position="125"/>
        <end position="145"/>
    </location>
</feature>
<feature type="transmembrane region" description="Helical" evidence="1">
    <location>
        <begin position="182"/>
        <end position="202"/>
    </location>
</feature>
<gene>
    <name evidence="1" type="primary">rsxE</name>
    <name type="ordered locus">SPA1399</name>
</gene>
<sequence>MSEIKDIVVQGLWKNNSALVQLLGLCPLLAVTSTATNALGLGLATTLVLTLTNLTVSTLRRWTPAEIRIPIYVMIIASVVSAVQMLINAYAFGLYQSLGIFIPLIVTNCIVVGRAEAFAAKKGPWLSALDGFSIGMGATGAMFVLGSLREILGNGTLFDGADSLLGGWAKVLRVEIFHTDSPFLLAMLPPGAFIGLGLMLAVKYLIDEKMKKRRAETAPSAVPAGETGKV</sequence>
<keyword id="KW-0997">Cell inner membrane</keyword>
<keyword id="KW-1003">Cell membrane</keyword>
<keyword id="KW-0249">Electron transport</keyword>
<keyword id="KW-0472">Membrane</keyword>
<keyword id="KW-1278">Translocase</keyword>
<keyword id="KW-0812">Transmembrane</keyword>
<keyword id="KW-1133">Transmembrane helix</keyword>
<keyword id="KW-0813">Transport</keyword>
<reference key="1">
    <citation type="journal article" date="2004" name="Nat. Genet.">
        <title>Comparison of genome degradation in Paratyphi A and Typhi, human-restricted serovars of Salmonella enterica that cause typhoid.</title>
        <authorList>
            <person name="McClelland M."/>
            <person name="Sanderson K.E."/>
            <person name="Clifton S.W."/>
            <person name="Latreille P."/>
            <person name="Porwollik S."/>
            <person name="Sabo A."/>
            <person name="Meyer R."/>
            <person name="Bieri T."/>
            <person name="Ozersky P."/>
            <person name="McLellan M."/>
            <person name="Harkins C.R."/>
            <person name="Wang C."/>
            <person name="Nguyen C."/>
            <person name="Berghoff A."/>
            <person name="Elliott G."/>
            <person name="Kohlberg S."/>
            <person name="Strong C."/>
            <person name="Du F."/>
            <person name="Carter J."/>
            <person name="Kremizki C."/>
            <person name="Layman D."/>
            <person name="Leonard S."/>
            <person name="Sun H."/>
            <person name="Fulton L."/>
            <person name="Nash W."/>
            <person name="Miner T."/>
            <person name="Minx P."/>
            <person name="Delehaunty K."/>
            <person name="Fronick C."/>
            <person name="Magrini V."/>
            <person name="Nhan M."/>
            <person name="Warren W."/>
            <person name="Florea L."/>
            <person name="Spieth J."/>
            <person name="Wilson R.K."/>
        </authorList>
    </citation>
    <scope>NUCLEOTIDE SEQUENCE [LARGE SCALE GENOMIC DNA]</scope>
    <source>
        <strain>ATCC 9150 / SARB42</strain>
    </source>
</reference>